<gene>
    <name evidence="1" type="primary">rpsE</name>
    <name type="ordered locus">AB57_3513</name>
</gene>
<protein>
    <recommendedName>
        <fullName evidence="1">Small ribosomal subunit protein uS5</fullName>
    </recommendedName>
    <alternativeName>
        <fullName evidence="2">30S ribosomal protein S5</fullName>
    </alternativeName>
</protein>
<comment type="function">
    <text evidence="1">With S4 and S12 plays an important role in translational accuracy.</text>
</comment>
<comment type="function">
    <text evidence="1">Located at the back of the 30S subunit body where it stabilizes the conformation of the head with respect to the body.</text>
</comment>
<comment type="subunit">
    <text evidence="1">Part of the 30S ribosomal subunit. Contacts proteins S4 and S8.</text>
</comment>
<comment type="domain">
    <text>The N-terminal domain interacts with the head of the 30S subunit; the C-terminal domain interacts with the body and contacts protein S4. The interaction surface between S4 and S5 is involved in control of translational fidelity.</text>
</comment>
<comment type="similarity">
    <text evidence="1">Belongs to the universal ribosomal protein uS5 family.</text>
</comment>
<organism>
    <name type="scientific">Acinetobacter baumannii (strain AB0057)</name>
    <dbReference type="NCBI Taxonomy" id="480119"/>
    <lineage>
        <taxon>Bacteria</taxon>
        <taxon>Pseudomonadati</taxon>
        <taxon>Pseudomonadota</taxon>
        <taxon>Gammaproteobacteria</taxon>
        <taxon>Moraxellales</taxon>
        <taxon>Moraxellaceae</taxon>
        <taxon>Acinetobacter</taxon>
        <taxon>Acinetobacter calcoaceticus/baumannii complex</taxon>
    </lineage>
</organism>
<evidence type="ECO:0000255" key="1">
    <source>
        <dbReference type="HAMAP-Rule" id="MF_01307"/>
    </source>
</evidence>
<evidence type="ECO:0000305" key="2"/>
<evidence type="ECO:0007829" key="3">
    <source>
        <dbReference type="PDB" id="7M4U"/>
    </source>
</evidence>
<proteinExistence type="evidence at protein level"/>
<feature type="chain" id="PRO_1000140827" description="Small ribosomal subunit protein uS5">
    <location>
        <begin position="1"/>
        <end position="165"/>
    </location>
</feature>
<feature type="domain" description="S5 DRBM" evidence="1">
    <location>
        <begin position="10"/>
        <end position="73"/>
    </location>
</feature>
<feature type="strand" evidence="3">
    <location>
        <begin position="11"/>
        <end position="24"/>
    </location>
</feature>
<feature type="strand" evidence="3">
    <location>
        <begin position="27"/>
        <end position="39"/>
    </location>
</feature>
<feature type="strand" evidence="3">
    <location>
        <begin position="41"/>
        <end position="54"/>
    </location>
</feature>
<feature type="helix" evidence="3">
    <location>
        <begin position="55"/>
        <end position="68"/>
    </location>
</feature>
<feature type="strand" evidence="3">
    <location>
        <begin position="84"/>
        <end position="88"/>
    </location>
</feature>
<feature type="strand" evidence="3">
    <location>
        <begin position="91"/>
        <end position="97"/>
    </location>
</feature>
<feature type="strand" evidence="3">
    <location>
        <begin position="104"/>
        <end position="106"/>
    </location>
</feature>
<feature type="helix" evidence="3">
    <location>
        <begin position="108"/>
        <end position="117"/>
    </location>
</feature>
<feature type="strand" evidence="3">
    <location>
        <begin position="121"/>
        <end position="128"/>
    </location>
</feature>
<feature type="helix" evidence="3">
    <location>
        <begin position="132"/>
        <end position="144"/>
    </location>
</feature>
<feature type="helix" evidence="3">
    <location>
        <begin position="149"/>
        <end position="156"/>
    </location>
</feature>
<feature type="helix" evidence="3">
    <location>
        <begin position="160"/>
        <end position="163"/>
    </location>
</feature>
<dbReference type="EMBL" id="CP001182">
    <property type="protein sequence ID" value="ACJ42880.1"/>
    <property type="molecule type" value="Genomic_DNA"/>
</dbReference>
<dbReference type="RefSeq" id="WP_001141025.1">
    <property type="nucleotide sequence ID" value="NC_011586.2"/>
</dbReference>
<dbReference type="PDB" id="6V39">
    <property type="method" value="EM"/>
    <property type="resolution" value="3.04 A"/>
    <property type="chains" value="e=1-165"/>
</dbReference>
<dbReference type="PDB" id="6V3A">
    <property type="method" value="EM"/>
    <property type="resolution" value="2.82 A"/>
    <property type="chains" value="e=1-165"/>
</dbReference>
<dbReference type="PDB" id="6V3B">
    <property type="method" value="EM"/>
    <property type="resolution" value="2.91 A"/>
    <property type="chains" value="e=1-165"/>
</dbReference>
<dbReference type="PDB" id="6V3E">
    <property type="method" value="EM"/>
    <property type="resolution" value="4.40 A"/>
    <property type="chains" value="e=1-165"/>
</dbReference>
<dbReference type="PDB" id="7M4U">
    <property type="method" value="EM"/>
    <property type="resolution" value="2.71 A"/>
    <property type="chains" value="e=1-165"/>
</dbReference>
<dbReference type="PDB" id="7M4W">
    <property type="method" value="EM"/>
    <property type="resolution" value="2.55 A"/>
    <property type="chains" value="e=1-165"/>
</dbReference>
<dbReference type="PDB" id="7M4X">
    <property type="method" value="EM"/>
    <property type="resolution" value="2.66 A"/>
    <property type="chains" value="e=1-165"/>
</dbReference>
<dbReference type="PDB" id="7M4Y">
    <property type="method" value="EM"/>
    <property type="resolution" value="2.50 A"/>
    <property type="chains" value="e=1-165"/>
</dbReference>
<dbReference type="PDB" id="7M4Z">
    <property type="method" value="EM"/>
    <property type="resolution" value="2.92 A"/>
    <property type="chains" value="e=1-165"/>
</dbReference>
<dbReference type="PDB" id="7RYF">
    <property type="method" value="EM"/>
    <property type="resolution" value="2.65 A"/>
    <property type="chains" value="e=1-165"/>
</dbReference>
<dbReference type="PDB" id="7RYG">
    <property type="method" value="EM"/>
    <property type="resolution" value="2.38 A"/>
    <property type="chains" value="e=1-165"/>
</dbReference>
<dbReference type="PDB" id="7RYH">
    <property type="method" value="EM"/>
    <property type="resolution" value="2.43 A"/>
    <property type="chains" value="e=1-165"/>
</dbReference>
<dbReference type="PDB" id="7UVV">
    <property type="method" value="EM"/>
    <property type="resolution" value="2.50 A"/>
    <property type="chains" value="e=1-165"/>
</dbReference>
<dbReference type="PDB" id="7UVW">
    <property type="method" value="EM"/>
    <property type="resolution" value="2.37 A"/>
    <property type="chains" value="e=1-165"/>
</dbReference>
<dbReference type="PDB" id="7UVX">
    <property type="method" value="EM"/>
    <property type="resolution" value="2.35 A"/>
    <property type="chains" value="e=1-165"/>
</dbReference>
<dbReference type="PDB" id="7UVY">
    <property type="method" value="EM"/>
    <property type="resolution" value="2.39 A"/>
    <property type="chains" value="e=1-165"/>
</dbReference>
<dbReference type="PDB" id="7UVZ">
    <property type="method" value="EM"/>
    <property type="resolution" value="2.21 A"/>
    <property type="chains" value="e=1-165"/>
</dbReference>
<dbReference type="PDB" id="7UW1">
    <property type="method" value="EM"/>
    <property type="resolution" value="2.21 A"/>
    <property type="chains" value="e=1-165"/>
</dbReference>
<dbReference type="PDBsum" id="6V39"/>
<dbReference type="PDBsum" id="6V3A"/>
<dbReference type="PDBsum" id="6V3B"/>
<dbReference type="PDBsum" id="6V3E"/>
<dbReference type="PDBsum" id="7M4U"/>
<dbReference type="PDBsum" id="7M4W"/>
<dbReference type="PDBsum" id="7M4X"/>
<dbReference type="PDBsum" id="7M4Y"/>
<dbReference type="PDBsum" id="7M4Z"/>
<dbReference type="PDBsum" id="7RYF"/>
<dbReference type="PDBsum" id="7RYG"/>
<dbReference type="PDBsum" id="7RYH"/>
<dbReference type="PDBsum" id="7UVV"/>
<dbReference type="PDBsum" id="7UVW"/>
<dbReference type="PDBsum" id="7UVX"/>
<dbReference type="PDBsum" id="7UVY"/>
<dbReference type="PDBsum" id="7UVZ"/>
<dbReference type="PDBsum" id="7UW1"/>
<dbReference type="EMDB" id="EMD-21030"/>
<dbReference type="EMDB" id="EMD-21031"/>
<dbReference type="EMDB" id="EMD-21032"/>
<dbReference type="EMDB" id="EMD-21034"/>
<dbReference type="EMDB" id="EMD-23666"/>
<dbReference type="EMDB" id="EMD-23668"/>
<dbReference type="EMDB" id="EMD-23669"/>
<dbReference type="EMDB" id="EMD-23670"/>
<dbReference type="EMDB" id="EMD-23671"/>
<dbReference type="EMDB" id="EMD-24738"/>
<dbReference type="EMDB" id="EMD-24739"/>
<dbReference type="EMDB" id="EMD-24740"/>
<dbReference type="EMDB" id="EMD-26817"/>
<dbReference type="EMDB" id="EMD-26818"/>
<dbReference type="EMDB" id="EMD-26819"/>
<dbReference type="EMDB" id="EMD-26820"/>
<dbReference type="EMDB" id="EMD-26821"/>
<dbReference type="EMDB" id="EMD-26822"/>
<dbReference type="SMR" id="B7IA22"/>
<dbReference type="IntAct" id="B7IA22">
    <property type="interactions" value="1"/>
</dbReference>
<dbReference type="GeneID" id="92895300"/>
<dbReference type="KEGG" id="abn:AB57_3513"/>
<dbReference type="HOGENOM" id="CLU_065898_2_2_6"/>
<dbReference type="Proteomes" id="UP000007094">
    <property type="component" value="Chromosome"/>
</dbReference>
<dbReference type="GO" id="GO:0015935">
    <property type="term" value="C:small ribosomal subunit"/>
    <property type="evidence" value="ECO:0007669"/>
    <property type="project" value="InterPro"/>
</dbReference>
<dbReference type="GO" id="GO:0019843">
    <property type="term" value="F:rRNA binding"/>
    <property type="evidence" value="ECO:0007669"/>
    <property type="project" value="UniProtKB-UniRule"/>
</dbReference>
<dbReference type="GO" id="GO:0003735">
    <property type="term" value="F:structural constituent of ribosome"/>
    <property type="evidence" value="ECO:0007669"/>
    <property type="project" value="InterPro"/>
</dbReference>
<dbReference type="GO" id="GO:0006412">
    <property type="term" value="P:translation"/>
    <property type="evidence" value="ECO:0007669"/>
    <property type="project" value="UniProtKB-UniRule"/>
</dbReference>
<dbReference type="FunFam" id="3.30.160.20:FF:000001">
    <property type="entry name" value="30S ribosomal protein S5"/>
    <property type="match status" value="1"/>
</dbReference>
<dbReference type="FunFam" id="3.30.230.10:FF:000002">
    <property type="entry name" value="30S ribosomal protein S5"/>
    <property type="match status" value="1"/>
</dbReference>
<dbReference type="Gene3D" id="3.30.160.20">
    <property type="match status" value="1"/>
</dbReference>
<dbReference type="Gene3D" id="3.30.230.10">
    <property type="match status" value="1"/>
</dbReference>
<dbReference type="HAMAP" id="MF_01307_B">
    <property type="entry name" value="Ribosomal_uS5_B"/>
    <property type="match status" value="1"/>
</dbReference>
<dbReference type="InterPro" id="IPR020568">
    <property type="entry name" value="Ribosomal_Su5_D2-typ_SF"/>
</dbReference>
<dbReference type="InterPro" id="IPR000851">
    <property type="entry name" value="Ribosomal_uS5"/>
</dbReference>
<dbReference type="InterPro" id="IPR005712">
    <property type="entry name" value="Ribosomal_uS5_bac-type"/>
</dbReference>
<dbReference type="InterPro" id="IPR005324">
    <property type="entry name" value="Ribosomal_uS5_C"/>
</dbReference>
<dbReference type="InterPro" id="IPR013810">
    <property type="entry name" value="Ribosomal_uS5_N"/>
</dbReference>
<dbReference type="InterPro" id="IPR018192">
    <property type="entry name" value="Ribosomal_uS5_N_CS"/>
</dbReference>
<dbReference type="InterPro" id="IPR014721">
    <property type="entry name" value="Ribsml_uS5_D2-typ_fold_subgr"/>
</dbReference>
<dbReference type="NCBIfam" id="TIGR01021">
    <property type="entry name" value="rpsE_bact"/>
    <property type="match status" value="1"/>
</dbReference>
<dbReference type="PANTHER" id="PTHR48277">
    <property type="entry name" value="MITOCHONDRIAL RIBOSOMAL PROTEIN S5"/>
    <property type="match status" value="1"/>
</dbReference>
<dbReference type="PANTHER" id="PTHR48277:SF1">
    <property type="entry name" value="MITOCHONDRIAL RIBOSOMAL PROTEIN S5"/>
    <property type="match status" value="1"/>
</dbReference>
<dbReference type="Pfam" id="PF00333">
    <property type="entry name" value="Ribosomal_S5"/>
    <property type="match status" value="1"/>
</dbReference>
<dbReference type="Pfam" id="PF03719">
    <property type="entry name" value="Ribosomal_S5_C"/>
    <property type="match status" value="1"/>
</dbReference>
<dbReference type="SUPFAM" id="SSF54768">
    <property type="entry name" value="dsRNA-binding domain-like"/>
    <property type="match status" value="1"/>
</dbReference>
<dbReference type="SUPFAM" id="SSF54211">
    <property type="entry name" value="Ribosomal protein S5 domain 2-like"/>
    <property type="match status" value="1"/>
</dbReference>
<dbReference type="PROSITE" id="PS00585">
    <property type="entry name" value="RIBOSOMAL_S5"/>
    <property type="match status" value="1"/>
</dbReference>
<dbReference type="PROSITE" id="PS50881">
    <property type="entry name" value="S5_DSRBD"/>
    <property type="match status" value="1"/>
</dbReference>
<reference key="1">
    <citation type="journal article" date="2008" name="J. Bacteriol.">
        <title>Comparative genome sequence analysis of multidrug-resistant Acinetobacter baumannii.</title>
        <authorList>
            <person name="Adams M.D."/>
            <person name="Goglin K."/>
            <person name="Molyneaux N."/>
            <person name="Hujer K.M."/>
            <person name="Lavender H."/>
            <person name="Jamison J.J."/>
            <person name="MacDonald I.J."/>
            <person name="Martin K.M."/>
            <person name="Russo T."/>
            <person name="Campagnari A.A."/>
            <person name="Hujer A.M."/>
            <person name="Bonomo R.A."/>
            <person name="Gill S.R."/>
        </authorList>
    </citation>
    <scope>NUCLEOTIDE SEQUENCE [LARGE SCALE GENOMIC DNA]</scope>
    <source>
        <strain>AB0057</strain>
    </source>
</reference>
<sequence>MAKVEQNEGLVEKLVAVDRVAKVVKGGRIFSFTALTVVGDGNGRVGFGRGKAREVPAAISKALEAARRNMITVDLAGTTLQHPVNARHGASRVYMQPASEGTGVIAGGAMRAVLEAAGVHNVLAKCYGSTNAANVVNATFKGLRDMTSPEKVAAKRGKSVEEIQG</sequence>
<accession>B7IA22</accession>
<keyword id="KW-0002">3D-structure</keyword>
<keyword id="KW-0687">Ribonucleoprotein</keyword>
<keyword id="KW-0689">Ribosomal protein</keyword>
<keyword id="KW-0694">RNA-binding</keyword>
<keyword id="KW-0699">rRNA-binding</keyword>
<name>RS5_ACIB5</name>